<gene>
    <name evidence="1" type="primary">uvrB</name>
    <name type="ordered locus">MGAS9429_Spy1117</name>
</gene>
<sequence>MIDKRDDKPFKLKSKYKPSGDQPQAIESLVDNIEGGEKAQILLGATGTGKTYTMSQVISKVNKPTLVIAHNKTLAGQLYGEFKEFFPDNAVEYFVSYYDYYQPEAYVPSSDTYIEKDSSVNDEIDKLRHSATSSLLERNDVIVVASVSCIYGLGSPKEYADSAVSLRPGQEISRDTLLNQLVDIQFERNDIDFQRGCFRVRGDVVEVFPASRDEHAFRVEFFGDEIDRICEIESLTGKTIGEVDHLVLFPATHFVTNDEHMEQSIAKIQAELAEQLQLFESEGKLLEAQRLRQRTEYDIEMLREMGYTSGVENYSRHMDGRSPGEPPYTLLDFFPEDFLIMIDESHMTMGQIKGMYNGDQARKQMLVDYGFRLPSALDNRPLRREEFESHVHQIVYVSATPGEYEMSQTNTIIEQIIRPTGLLDPEIDVRPSMGQMDDLLGEINQRVARDERTFITTLTKKMAEDLTDYLKEMGVKVKYMHSDIKTLERTEIIRDLRLGVFDVLIGINLLREGIDVPEVSLVAILDADKEGFLRNERGLIQTIGRAARNVDGHVIMYADKMTDSMQRAIDETARRREIQIAYNKAHGIVPQTIKKDIRGLISISKTSHNDISKEEMDYESMSRGERKEAINALQKQMQEAAELLDFELAAQMRDLILELKLMD</sequence>
<name>UVRB_STRPC</name>
<accession>Q1JLB5</accession>
<evidence type="ECO:0000255" key="1">
    <source>
        <dbReference type="HAMAP-Rule" id="MF_00204"/>
    </source>
</evidence>
<evidence type="ECO:0000256" key="2">
    <source>
        <dbReference type="SAM" id="MobiDB-lite"/>
    </source>
</evidence>
<keyword id="KW-0067">ATP-binding</keyword>
<keyword id="KW-0963">Cytoplasm</keyword>
<keyword id="KW-0227">DNA damage</keyword>
<keyword id="KW-0228">DNA excision</keyword>
<keyword id="KW-0234">DNA repair</keyword>
<keyword id="KW-0267">Excision nuclease</keyword>
<keyword id="KW-0347">Helicase</keyword>
<keyword id="KW-0378">Hydrolase</keyword>
<keyword id="KW-0547">Nucleotide-binding</keyword>
<keyword id="KW-0742">SOS response</keyword>
<protein>
    <recommendedName>
        <fullName evidence="1">UvrABC system protein B</fullName>
        <shortName evidence="1">Protein UvrB</shortName>
    </recommendedName>
    <alternativeName>
        <fullName evidence="1">Excinuclease ABC subunit B</fullName>
    </alternativeName>
</protein>
<feature type="chain" id="PRO_1000077927" description="UvrABC system protein B">
    <location>
        <begin position="1"/>
        <end position="663"/>
    </location>
</feature>
<feature type="domain" description="Helicase ATP-binding" evidence="1">
    <location>
        <begin position="31"/>
        <end position="271"/>
    </location>
</feature>
<feature type="domain" description="Helicase C-terminal" evidence="1">
    <location>
        <begin position="435"/>
        <end position="601"/>
    </location>
</feature>
<feature type="domain" description="UVR" evidence="1">
    <location>
        <begin position="627"/>
        <end position="662"/>
    </location>
</feature>
<feature type="region of interest" description="Disordered" evidence="2">
    <location>
        <begin position="1"/>
        <end position="23"/>
    </location>
</feature>
<feature type="short sequence motif" description="Beta-hairpin">
    <location>
        <begin position="97"/>
        <end position="120"/>
    </location>
</feature>
<feature type="compositionally biased region" description="Basic and acidic residues" evidence="2">
    <location>
        <begin position="1"/>
        <end position="10"/>
    </location>
</feature>
<feature type="binding site" evidence="1">
    <location>
        <begin position="44"/>
        <end position="51"/>
    </location>
    <ligand>
        <name>ATP</name>
        <dbReference type="ChEBI" id="CHEBI:30616"/>
    </ligand>
</feature>
<comment type="function">
    <text evidence="1">The UvrABC repair system catalyzes the recognition and processing of DNA lesions. A damage recognition complex composed of 2 UvrA and 2 UvrB subunits scans DNA for abnormalities. Upon binding of the UvrA(2)B(2) complex to a putative damaged site, the DNA wraps around one UvrB monomer. DNA wrap is dependent on ATP binding by UvrB and probably causes local melting of the DNA helix, facilitating insertion of UvrB beta-hairpin between the DNA strands. Then UvrB probes one DNA strand for the presence of a lesion. If a lesion is found the UvrA subunits dissociate and the UvrB-DNA preincision complex is formed. This complex is subsequently bound by UvrC and the second UvrB is released. If no lesion is found, the DNA wraps around the other UvrB subunit that will check the other stand for damage.</text>
</comment>
<comment type="subunit">
    <text evidence="1">Forms a heterotetramer with UvrA during the search for lesions. Interacts with UvrC in an incision complex.</text>
</comment>
<comment type="subcellular location">
    <subcellularLocation>
        <location evidence="1">Cytoplasm</location>
    </subcellularLocation>
</comment>
<comment type="domain">
    <text evidence="1">The beta-hairpin motif is involved in DNA binding.</text>
</comment>
<comment type="similarity">
    <text evidence="1">Belongs to the UvrB family.</text>
</comment>
<organism>
    <name type="scientific">Streptococcus pyogenes serotype M12 (strain MGAS9429)</name>
    <dbReference type="NCBI Taxonomy" id="370551"/>
    <lineage>
        <taxon>Bacteria</taxon>
        <taxon>Bacillati</taxon>
        <taxon>Bacillota</taxon>
        <taxon>Bacilli</taxon>
        <taxon>Lactobacillales</taxon>
        <taxon>Streptococcaceae</taxon>
        <taxon>Streptococcus</taxon>
    </lineage>
</organism>
<reference key="1">
    <citation type="journal article" date="2006" name="Proc. Natl. Acad. Sci. U.S.A.">
        <title>Molecular genetic anatomy of inter- and intraserotype variation in the human bacterial pathogen group A Streptococcus.</title>
        <authorList>
            <person name="Beres S.B."/>
            <person name="Richter E.W."/>
            <person name="Nagiec M.J."/>
            <person name="Sumby P."/>
            <person name="Porcella S.F."/>
            <person name="DeLeo F.R."/>
            <person name="Musser J.M."/>
        </authorList>
    </citation>
    <scope>NUCLEOTIDE SEQUENCE [LARGE SCALE GENOMIC DNA]</scope>
    <source>
        <strain>MGAS9429</strain>
    </source>
</reference>
<dbReference type="EMBL" id="CP000259">
    <property type="protein sequence ID" value="ABF32304.1"/>
    <property type="molecule type" value="Genomic_DNA"/>
</dbReference>
<dbReference type="RefSeq" id="WP_002989569.1">
    <property type="nucleotide sequence ID" value="NC_008021.1"/>
</dbReference>
<dbReference type="SMR" id="Q1JLB5"/>
<dbReference type="KEGG" id="spk:MGAS9429_Spy1117"/>
<dbReference type="HOGENOM" id="CLU_009621_2_1_9"/>
<dbReference type="Proteomes" id="UP000002433">
    <property type="component" value="Chromosome"/>
</dbReference>
<dbReference type="GO" id="GO:0005737">
    <property type="term" value="C:cytoplasm"/>
    <property type="evidence" value="ECO:0007669"/>
    <property type="project" value="UniProtKB-SubCell"/>
</dbReference>
<dbReference type="GO" id="GO:0009380">
    <property type="term" value="C:excinuclease repair complex"/>
    <property type="evidence" value="ECO:0007669"/>
    <property type="project" value="InterPro"/>
</dbReference>
<dbReference type="GO" id="GO:0005524">
    <property type="term" value="F:ATP binding"/>
    <property type="evidence" value="ECO:0007669"/>
    <property type="project" value="UniProtKB-UniRule"/>
</dbReference>
<dbReference type="GO" id="GO:0016887">
    <property type="term" value="F:ATP hydrolysis activity"/>
    <property type="evidence" value="ECO:0007669"/>
    <property type="project" value="InterPro"/>
</dbReference>
<dbReference type="GO" id="GO:0003677">
    <property type="term" value="F:DNA binding"/>
    <property type="evidence" value="ECO:0007669"/>
    <property type="project" value="UniProtKB-UniRule"/>
</dbReference>
<dbReference type="GO" id="GO:0009381">
    <property type="term" value="F:excinuclease ABC activity"/>
    <property type="evidence" value="ECO:0007669"/>
    <property type="project" value="UniProtKB-UniRule"/>
</dbReference>
<dbReference type="GO" id="GO:0004386">
    <property type="term" value="F:helicase activity"/>
    <property type="evidence" value="ECO:0007669"/>
    <property type="project" value="UniProtKB-KW"/>
</dbReference>
<dbReference type="GO" id="GO:0006289">
    <property type="term" value="P:nucleotide-excision repair"/>
    <property type="evidence" value="ECO:0007669"/>
    <property type="project" value="UniProtKB-UniRule"/>
</dbReference>
<dbReference type="GO" id="GO:0009432">
    <property type="term" value="P:SOS response"/>
    <property type="evidence" value="ECO:0007669"/>
    <property type="project" value="UniProtKB-UniRule"/>
</dbReference>
<dbReference type="CDD" id="cd17916">
    <property type="entry name" value="DEXHc_UvrB"/>
    <property type="match status" value="1"/>
</dbReference>
<dbReference type="CDD" id="cd18790">
    <property type="entry name" value="SF2_C_UvrB"/>
    <property type="match status" value="1"/>
</dbReference>
<dbReference type="Gene3D" id="3.40.50.300">
    <property type="entry name" value="P-loop containing nucleotide triphosphate hydrolases"/>
    <property type="match status" value="3"/>
</dbReference>
<dbReference type="Gene3D" id="4.10.860.10">
    <property type="entry name" value="UVR domain"/>
    <property type="match status" value="1"/>
</dbReference>
<dbReference type="HAMAP" id="MF_00204">
    <property type="entry name" value="UvrB"/>
    <property type="match status" value="1"/>
</dbReference>
<dbReference type="InterPro" id="IPR006935">
    <property type="entry name" value="Helicase/UvrB_N"/>
</dbReference>
<dbReference type="InterPro" id="IPR014001">
    <property type="entry name" value="Helicase_ATP-bd"/>
</dbReference>
<dbReference type="InterPro" id="IPR001650">
    <property type="entry name" value="Helicase_C-like"/>
</dbReference>
<dbReference type="InterPro" id="IPR027417">
    <property type="entry name" value="P-loop_NTPase"/>
</dbReference>
<dbReference type="InterPro" id="IPR001943">
    <property type="entry name" value="UVR_dom"/>
</dbReference>
<dbReference type="InterPro" id="IPR036876">
    <property type="entry name" value="UVR_dom_sf"/>
</dbReference>
<dbReference type="InterPro" id="IPR004807">
    <property type="entry name" value="UvrB"/>
</dbReference>
<dbReference type="InterPro" id="IPR041471">
    <property type="entry name" value="UvrB_inter"/>
</dbReference>
<dbReference type="InterPro" id="IPR024759">
    <property type="entry name" value="UvrB_YAD/RRR_dom"/>
</dbReference>
<dbReference type="NCBIfam" id="NF003673">
    <property type="entry name" value="PRK05298.1"/>
    <property type="match status" value="1"/>
</dbReference>
<dbReference type="NCBIfam" id="TIGR00631">
    <property type="entry name" value="uvrb"/>
    <property type="match status" value="1"/>
</dbReference>
<dbReference type="PANTHER" id="PTHR24029">
    <property type="entry name" value="UVRABC SYSTEM PROTEIN B"/>
    <property type="match status" value="1"/>
</dbReference>
<dbReference type="PANTHER" id="PTHR24029:SF0">
    <property type="entry name" value="UVRABC SYSTEM PROTEIN B"/>
    <property type="match status" value="1"/>
</dbReference>
<dbReference type="Pfam" id="PF00271">
    <property type="entry name" value="Helicase_C"/>
    <property type="match status" value="1"/>
</dbReference>
<dbReference type="Pfam" id="PF04851">
    <property type="entry name" value="ResIII"/>
    <property type="match status" value="1"/>
</dbReference>
<dbReference type="Pfam" id="PF02151">
    <property type="entry name" value="UVR"/>
    <property type="match status" value="1"/>
</dbReference>
<dbReference type="Pfam" id="PF12344">
    <property type="entry name" value="UvrB"/>
    <property type="match status" value="1"/>
</dbReference>
<dbReference type="Pfam" id="PF17757">
    <property type="entry name" value="UvrB_inter"/>
    <property type="match status" value="1"/>
</dbReference>
<dbReference type="SMART" id="SM00487">
    <property type="entry name" value="DEXDc"/>
    <property type="match status" value="1"/>
</dbReference>
<dbReference type="SMART" id="SM00490">
    <property type="entry name" value="HELICc"/>
    <property type="match status" value="1"/>
</dbReference>
<dbReference type="SUPFAM" id="SSF46600">
    <property type="entry name" value="C-terminal UvrC-binding domain of UvrB"/>
    <property type="match status" value="1"/>
</dbReference>
<dbReference type="SUPFAM" id="SSF52540">
    <property type="entry name" value="P-loop containing nucleoside triphosphate hydrolases"/>
    <property type="match status" value="2"/>
</dbReference>
<dbReference type="PROSITE" id="PS51192">
    <property type="entry name" value="HELICASE_ATP_BIND_1"/>
    <property type="match status" value="1"/>
</dbReference>
<dbReference type="PROSITE" id="PS51194">
    <property type="entry name" value="HELICASE_CTER"/>
    <property type="match status" value="1"/>
</dbReference>
<dbReference type="PROSITE" id="PS50151">
    <property type="entry name" value="UVR"/>
    <property type="match status" value="1"/>
</dbReference>
<proteinExistence type="inferred from homology"/>